<evidence type="ECO:0000255" key="1">
    <source>
        <dbReference type="HAMAP-Rule" id="MF_01189"/>
    </source>
</evidence>
<dbReference type="EMBL" id="CP000886">
    <property type="protein sequence ID" value="ABX70005.1"/>
    <property type="molecule type" value="Genomic_DNA"/>
</dbReference>
<dbReference type="RefSeq" id="WP_001004800.1">
    <property type="nucleotide sequence ID" value="NC_010102.1"/>
</dbReference>
<dbReference type="SMR" id="A9MWE8"/>
<dbReference type="KEGG" id="spq:SPAB_04694"/>
<dbReference type="PATRIC" id="fig|1016998.12.peg.4417"/>
<dbReference type="HOGENOM" id="CLU_001265_61_1_6"/>
<dbReference type="BioCyc" id="SENT1016998:SPAB_RS19070-MONOMER"/>
<dbReference type="Proteomes" id="UP000008556">
    <property type="component" value="Chromosome"/>
</dbReference>
<dbReference type="GO" id="GO:0005886">
    <property type="term" value="C:plasma membrane"/>
    <property type="evidence" value="ECO:0007669"/>
    <property type="project" value="UniProtKB-SubCell"/>
</dbReference>
<dbReference type="GO" id="GO:0015297">
    <property type="term" value="F:antiporter activity"/>
    <property type="evidence" value="ECO:0007669"/>
    <property type="project" value="UniProtKB-KW"/>
</dbReference>
<dbReference type="GO" id="GO:0015211">
    <property type="term" value="F:purine nucleoside transmembrane transporter activity"/>
    <property type="evidence" value="ECO:0007669"/>
    <property type="project" value="UniProtKB-UniRule"/>
</dbReference>
<dbReference type="CDD" id="cd17324">
    <property type="entry name" value="MFS_NepI_like"/>
    <property type="match status" value="1"/>
</dbReference>
<dbReference type="FunFam" id="1.20.1250.20:FF:000113">
    <property type="entry name" value="Purine ribonucleoside efflux pump NepI"/>
    <property type="match status" value="1"/>
</dbReference>
<dbReference type="Gene3D" id="1.20.1250.20">
    <property type="entry name" value="MFS general substrate transporter like domains"/>
    <property type="match status" value="1"/>
</dbReference>
<dbReference type="HAMAP" id="MF_01189">
    <property type="entry name" value="MFS_NepI"/>
    <property type="match status" value="1"/>
</dbReference>
<dbReference type="InterPro" id="IPR011701">
    <property type="entry name" value="MFS"/>
</dbReference>
<dbReference type="InterPro" id="IPR020846">
    <property type="entry name" value="MFS_dom"/>
</dbReference>
<dbReference type="InterPro" id="IPR050189">
    <property type="entry name" value="MFS_Efflux_Transporters"/>
</dbReference>
<dbReference type="InterPro" id="IPR023680">
    <property type="entry name" value="MFS_NepI"/>
</dbReference>
<dbReference type="InterPro" id="IPR036259">
    <property type="entry name" value="MFS_trans_sf"/>
</dbReference>
<dbReference type="NCBIfam" id="NF007578">
    <property type="entry name" value="PRK10213.1"/>
    <property type="match status" value="1"/>
</dbReference>
<dbReference type="PANTHER" id="PTHR43124">
    <property type="entry name" value="PURINE EFFLUX PUMP PBUE"/>
    <property type="match status" value="1"/>
</dbReference>
<dbReference type="PANTHER" id="PTHR43124:SF5">
    <property type="entry name" value="PURINE RIBONUCLEOSIDE EFFLUX PUMP NEPI"/>
    <property type="match status" value="1"/>
</dbReference>
<dbReference type="Pfam" id="PF07690">
    <property type="entry name" value="MFS_1"/>
    <property type="match status" value="1"/>
</dbReference>
<dbReference type="SUPFAM" id="SSF103473">
    <property type="entry name" value="MFS general substrate transporter"/>
    <property type="match status" value="1"/>
</dbReference>
<dbReference type="PROSITE" id="PS50850">
    <property type="entry name" value="MFS"/>
    <property type="match status" value="1"/>
</dbReference>
<keyword id="KW-0050">Antiport</keyword>
<keyword id="KW-0997">Cell inner membrane</keyword>
<keyword id="KW-1003">Cell membrane</keyword>
<keyword id="KW-0472">Membrane</keyword>
<keyword id="KW-0812">Transmembrane</keyword>
<keyword id="KW-1133">Transmembrane helix</keyword>
<keyword id="KW-0813">Transport</keyword>
<name>NEPI_SALPB</name>
<proteinExistence type="inferred from homology"/>
<comment type="function">
    <text evidence="1">Involved in the efflux of purine ribonucleosides, such as inosine and guanosine.</text>
</comment>
<comment type="catalytic activity">
    <reaction evidence="1">
        <text>inosine(in) + H(+)(out) = inosine(out) + H(+)(in)</text>
        <dbReference type="Rhea" id="RHEA:29211"/>
        <dbReference type="ChEBI" id="CHEBI:15378"/>
        <dbReference type="ChEBI" id="CHEBI:17596"/>
    </reaction>
    <physiologicalReaction direction="left-to-right" evidence="1">
        <dbReference type="Rhea" id="RHEA:29212"/>
    </physiologicalReaction>
</comment>
<comment type="catalytic activity">
    <reaction evidence="1">
        <text>guanosine(in) + H(+)(out) = guanosine(out) + H(+)(in)</text>
        <dbReference type="Rhea" id="RHEA:29583"/>
        <dbReference type="ChEBI" id="CHEBI:15378"/>
        <dbReference type="ChEBI" id="CHEBI:16750"/>
    </reaction>
    <physiologicalReaction direction="left-to-right" evidence="1">
        <dbReference type="Rhea" id="RHEA:29584"/>
    </physiologicalReaction>
</comment>
<comment type="subcellular location">
    <subcellularLocation>
        <location evidence="1">Cell inner membrane</location>
        <topology evidence="1">Multi-pass membrane protein</topology>
    </subcellularLocation>
</comment>
<comment type="similarity">
    <text evidence="1">Belongs to the major facilitator superfamily. DHA1 family. NepI (TC 2.A.1.2.26) subfamily.</text>
</comment>
<protein>
    <recommendedName>
        <fullName evidence="1">Purine ribonucleoside efflux pump NepI</fullName>
    </recommendedName>
</protein>
<organism>
    <name type="scientific">Salmonella paratyphi B (strain ATCC BAA-1250 / SPB7)</name>
    <dbReference type="NCBI Taxonomy" id="1016998"/>
    <lineage>
        <taxon>Bacteria</taxon>
        <taxon>Pseudomonadati</taxon>
        <taxon>Pseudomonadota</taxon>
        <taxon>Gammaproteobacteria</taxon>
        <taxon>Enterobacterales</taxon>
        <taxon>Enterobacteriaceae</taxon>
        <taxon>Salmonella</taxon>
    </lineage>
</organism>
<reference key="1">
    <citation type="submission" date="2007-11" db="EMBL/GenBank/DDBJ databases">
        <authorList>
            <consortium name="The Salmonella enterica serovar Paratyphi B Genome Sequencing Project"/>
            <person name="McClelland M."/>
            <person name="Sanderson E.K."/>
            <person name="Porwollik S."/>
            <person name="Spieth J."/>
            <person name="Clifton W.S."/>
            <person name="Fulton R."/>
            <person name="Cordes M."/>
            <person name="Wollam A."/>
            <person name="Shah N."/>
            <person name="Pepin K."/>
            <person name="Bhonagiri V."/>
            <person name="Nash W."/>
            <person name="Johnson M."/>
            <person name="Thiruvilangam P."/>
            <person name="Wilson R."/>
        </authorList>
    </citation>
    <scope>NUCLEOTIDE SEQUENCE [LARGE SCALE GENOMIC DNA]</scope>
    <source>
        <strain>ATCC BAA-1250 / SPB7</strain>
    </source>
</reference>
<gene>
    <name evidence="1" type="primary">nepI</name>
    <name type="ordered locus">SPAB_04694</name>
</gene>
<feature type="chain" id="PRO_1000085470" description="Purine ribonucleoside efflux pump NepI">
    <location>
        <begin position="1"/>
        <end position="397"/>
    </location>
</feature>
<feature type="topological domain" description="Cytoplasmic" evidence="1">
    <location>
        <begin position="1"/>
        <end position="21"/>
    </location>
</feature>
<feature type="transmembrane region" description="Helical" evidence="1">
    <location>
        <begin position="22"/>
        <end position="42"/>
    </location>
</feature>
<feature type="topological domain" description="Periplasmic" evidence="1">
    <location>
        <begin position="43"/>
        <end position="54"/>
    </location>
</feature>
<feature type="transmembrane region" description="Helical" evidence="1">
    <location>
        <begin position="55"/>
        <end position="75"/>
    </location>
</feature>
<feature type="topological domain" description="Cytoplasmic" evidence="1">
    <location>
        <begin position="76"/>
        <end position="85"/>
    </location>
</feature>
<feature type="transmembrane region" description="Helical" evidence="1">
    <location>
        <begin position="86"/>
        <end position="106"/>
    </location>
</feature>
<feature type="topological domain" description="Periplasmic" evidence="1">
    <location>
        <position position="107"/>
    </location>
</feature>
<feature type="transmembrane region" description="Helical" evidence="1">
    <location>
        <begin position="108"/>
        <end position="128"/>
    </location>
</feature>
<feature type="topological domain" description="Cytoplasmic" evidence="1">
    <location>
        <begin position="129"/>
        <end position="147"/>
    </location>
</feature>
<feature type="transmembrane region" description="Helical" evidence="1">
    <location>
        <begin position="148"/>
        <end position="168"/>
    </location>
</feature>
<feature type="topological domain" description="Periplasmic" evidence="1">
    <location>
        <begin position="169"/>
        <end position="175"/>
    </location>
</feature>
<feature type="transmembrane region" description="Helical" evidence="1">
    <location>
        <begin position="176"/>
        <end position="196"/>
    </location>
</feature>
<feature type="topological domain" description="Cytoplasmic" evidence="1">
    <location>
        <begin position="197"/>
        <end position="215"/>
    </location>
</feature>
<feature type="transmembrane region" description="Helical" evidence="1">
    <location>
        <begin position="216"/>
        <end position="236"/>
    </location>
</feature>
<feature type="topological domain" description="Periplasmic" evidence="1">
    <location>
        <begin position="237"/>
        <end position="255"/>
    </location>
</feature>
<feature type="transmembrane region" description="Helical" evidence="1">
    <location>
        <begin position="256"/>
        <end position="276"/>
    </location>
</feature>
<feature type="topological domain" description="Cytoplasmic" evidence="1">
    <location>
        <begin position="277"/>
        <end position="281"/>
    </location>
</feature>
<feature type="transmembrane region" description="Helical" evidence="1">
    <location>
        <begin position="282"/>
        <end position="302"/>
    </location>
</feature>
<feature type="topological domain" description="Periplasmic" evidence="1">
    <location>
        <begin position="303"/>
        <end position="305"/>
    </location>
</feature>
<feature type="transmembrane region" description="Helical" evidence="1">
    <location>
        <begin position="306"/>
        <end position="326"/>
    </location>
</feature>
<feature type="topological domain" description="Cytoplasmic" evidence="1">
    <location>
        <begin position="327"/>
        <end position="343"/>
    </location>
</feature>
<feature type="transmembrane region" description="Helical" evidence="1">
    <location>
        <begin position="344"/>
        <end position="364"/>
    </location>
</feature>
<feature type="topological domain" description="Periplasmic" evidence="1">
    <location>
        <begin position="365"/>
        <end position="366"/>
    </location>
</feature>
<feature type="transmembrane region" description="Helical" evidence="1">
    <location>
        <begin position="367"/>
        <end position="387"/>
    </location>
</feature>
<feature type="topological domain" description="Cytoplasmic" evidence="1">
    <location>
        <begin position="388"/>
        <end position="397"/>
    </location>
</feature>
<sequence length="397" mass="41718">MNENIAEKFRADGVARPNWSAVFAVAFCVACLITVEFLPVSLLTPMAQDLGISEGVAGQSVTVTAFVAMFSSLFITQIIQATDRRYIVILFAVLLTASCLMVSFANSFTLLLLGRACLGLALGGFWAMSASLTMRLVPARTVPKALSVIFGAVSIALVIAAPLGSFLGGIIGWRNVFNAAAVMGVLCVIWVVKSLPSLPGEPSHQKQNMFSLLQRPGVMAGMIAIFMSFAGQFAFFTYIRPVYMNLAGFDVDGLTLVLLSFGIASFVGTSFSSYVLKRSVKLALAGAPLLLALSALTLIVWGSDKTVAAVIAIIWGLAFALVPVGWSTWITRSLADQAEKAGSIQVAVIQLANTCGAAVGGYALDNFGLLSPLALSGGLMLLTALVVAAKVRITPMS</sequence>
<accession>A9MWE8</accession>